<comment type="function">
    <text evidence="1">DNA-dependent RNA polymerase catalyzes the transcription of DNA into RNA using the four ribonucleoside triphosphates as substrates.</text>
</comment>
<comment type="catalytic activity">
    <reaction evidence="1">
        <text>RNA(n) + a ribonucleoside 5'-triphosphate = RNA(n+1) + diphosphate</text>
        <dbReference type="Rhea" id="RHEA:21248"/>
        <dbReference type="Rhea" id="RHEA-COMP:14527"/>
        <dbReference type="Rhea" id="RHEA-COMP:17342"/>
        <dbReference type="ChEBI" id="CHEBI:33019"/>
        <dbReference type="ChEBI" id="CHEBI:61557"/>
        <dbReference type="ChEBI" id="CHEBI:140395"/>
        <dbReference type="EC" id="2.7.7.6"/>
    </reaction>
</comment>
<comment type="cofactor">
    <cofactor evidence="1">
        <name>Mg(2+)</name>
        <dbReference type="ChEBI" id="CHEBI:18420"/>
    </cofactor>
    <text evidence="1">Binds 1 Mg(2+) ion per subunit.</text>
</comment>
<comment type="cofactor">
    <cofactor evidence="1">
        <name>Zn(2+)</name>
        <dbReference type="ChEBI" id="CHEBI:29105"/>
    </cofactor>
    <text evidence="1">Binds 2 Zn(2+) ions per subunit.</text>
</comment>
<comment type="subunit">
    <text evidence="1">The RNAP catalytic core consists of 2 alpha, 1 beta, 1 beta' and 1 omega subunit. When a sigma factor is associated with the core the holoenzyme is formed, which can initiate transcription.</text>
</comment>
<comment type="similarity">
    <text evidence="1">Belongs to the RNA polymerase beta' chain family.</text>
</comment>
<proteinExistence type="inferred from homology"/>
<evidence type="ECO:0000255" key="1">
    <source>
        <dbReference type="HAMAP-Rule" id="MF_01322"/>
    </source>
</evidence>
<evidence type="ECO:0000256" key="2">
    <source>
        <dbReference type="SAM" id="MobiDB-lite"/>
    </source>
</evidence>
<dbReference type="EC" id="2.7.7.6" evidence="1"/>
<dbReference type="EMBL" id="CP001635">
    <property type="protein sequence ID" value="ACS17252.1"/>
    <property type="molecule type" value="Genomic_DNA"/>
</dbReference>
<dbReference type="SMR" id="C5CKF4"/>
<dbReference type="STRING" id="543728.Vapar_0589"/>
<dbReference type="KEGG" id="vap:Vapar_0589"/>
<dbReference type="eggNOG" id="COG0086">
    <property type="taxonomic scope" value="Bacteria"/>
</dbReference>
<dbReference type="HOGENOM" id="CLU_000524_3_1_4"/>
<dbReference type="OrthoDB" id="9815296at2"/>
<dbReference type="GO" id="GO:0000428">
    <property type="term" value="C:DNA-directed RNA polymerase complex"/>
    <property type="evidence" value="ECO:0007669"/>
    <property type="project" value="UniProtKB-KW"/>
</dbReference>
<dbReference type="GO" id="GO:0003677">
    <property type="term" value="F:DNA binding"/>
    <property type="evidence" value="ECO:0007669"/>
    <property type="project" value="UniProtKB-UniRule"/>
</dbReference>
<dbReference type="GO" id="GO:0003899">
    <property type="term" value="F:DNA-directed RNA polymerase activity"/>
    <property type="evidence" value="ECO:0007669"/>
    <property type="project" value="UniProtKB-UniRule"/>
</dbReference>
<dbReference type="GO" id="GO:0000287">
    <property type="term" value="F:magnesium ion binding"/>
    <property type="evidence" value="ECO:0007669"/>
    <property type="project" value="UniProtKB-UniRule"/>
</dbReference>
<dbReference type="GO" id="GO:0008270">
    <property type="term" value="F:zinc ion binding"/>
    <property type="evidence" value="ECO:0007669"/>
    <property type="project" value="UniProtKB-UniRule"/>
</dbReference>
<dbReference type="GO" id="GO:0006351">
    <property type="term" value="P:DNA-templated transcription"/>
    <property type="evidence" value="ECO:0007669"/>
    <property type="project" value="UniProtKB-UniRule"/>
</dbReference>
<dbReference type="CDD" id="cd02655">
    <property type="entry name" value="RNAP_beta'_C"/>
    <property type="match status" value="1"/>
</dbReference>
<dbReference type="CDD" id="cd01609">
    <property type="entry name" value="RNAP_beta'_N"/>
    <property type="match status" value="1"/>
</dbReference>
<dbReference type="FunFam" id="1.10.132.30:FF:000003">
    <property type="entry name" value="DNA-directed RNA polymerase subunit beta"/>
    <property type="match status" value="1"/>
</dbReference>
<dbReference type="FunFam" id="1.10.150.390:FF:000002">
    <property type="entry name" value="DNA-directed RNA polymerase subunit beta"/>
    <property type="match status" value="1"/>
</dbReference>
<dbReference type="FunFam" id="4.10.860.120:FF:000001">
    <property type="entry name" value="DNA-directed RNA polymerase subunit beta"/>
    <property type="match status" value="1"/>
</dbReference>
<dbReference type="Gene3D" id="1.10.132.30">
    <property type="match status" value="1"/>
</dbReference>
<dbReference type="Gene3D" id="1.10.150.390">
    <property type="match status" value="1"/>
</dbReference>
<dbReference type="Gene3D" id="1.10.1790.20">
    <property type="match status" value="1"/>
</dbReference>
<dbReference type="Gene3D" id="1.10.40.90">
    <property type="match status" value="1"/>
</dbReference>
<dbReference type="Gene3D" id="2.40.40.20">
    <property type="match status" value="1"/>
</dbReference>
<dbReference type="Gene3D" id="2.40.50.100">
    <property type="match status" value="3"/>
</dbReference>
<dbReference type="Gene3D" id="4.10.860.120">
    <property type="entry name" value="RNA polymerase II, clamp domain"/>
    <property type="match status" value="1"/>
</dbReference>
<dbReference type="Gene3D" id="1.10.274.100">
    <property type="entry name" value="RNA polymerase Rpb1, domain 3"/>
    <property type="match status" value="1"/>
</dbReference>
<dbReference type="HAMAP" id="MF_01322">
    <property type="entry name" value="RNApol_bact_RpoC"/>
    <property type="match status" value="1"/>
</dbReference>
<dbReference type="InterPro" id="IPR045867">
    <property type="entry name" value="DNA-dir_RpoC_beta_prime"/>
</dbReference>
<dbReference type="InterPro" id="IPR012754">
    <property type="entry name" value="DNA-dir_RpoC_beta_prime_bact"/>
</dbReference>
<dbReference type="InterPro" id="IPR000722">
    <property type="entry name" value="RNA_pol_asu"/>
</dbReference>
<dbReference type="InterPro" id="IPR006592">
    <property type="entry name" value="RNA_pol_N"/>
</dbReference>
<dbReference type="InterPro" id="IPR007080">
    <property type="entry name" value="RNA_pol_Rpb1_1"/>
</dbReference>
<dbReference type="InterPro" id="IPR007066">
    <property type="entry name" value="RNA_pol_Rpb1_3"/>
</dbReference>
<dbReference type="InterPro" id="IPR042102">
    <property type="entry name" value="RNA_pol_Rpb1_3_sf"/>
</dbReference>
<dbReference type="InterPro" id="IPR007083">
    <property type="entry name" value="RNA_pol_Rpb1_4"/>
</dbReference>
<dbReference type="InterPro" id="IPR007081">
    <property type="entry name" value="RNA_pol_Rpb1_5"/>
</dbReference>
<dbReference type="InterPro" id="IPR044893">
    <property type="entry name" value="RNA_pol_Rpb1_clamp_domain"/>
</dbReference>
<dbReference type="InterPro" id="IPR038120">
    <property type="entry name" value="Rpb1_funnel_sf"/>
</dbReference>
<dbReference type="NCBIfam" id="TIGR02386">
    <property type="entry name" value="rpoC_TIGR"/>
    <property type="match status" value="1"/>
</dbReference>
<dbReference type="PANTHER" id="PTHR19376">
    <property type="entry name" value="DNA-DIRECTED RNA POLYMERASE"/>
    <property type="match status" value="1"/>
</dbReference>
<dbReference type="PANTHER" id="PTHR19376:SF54">
    <property type="entry name" value="DNA-DIRECTED RNA POLYMERASE SUBUNIT BETA"/>
    <property type="match status" value="1"/>
</dbReference>
<dbReference type="Pfam" id="PF04997">
    <property type="entry name" value="RNA_pol_Rpb1_1"/>
    <property type="match status" value="1"/>
</dbReference>
<dbReference type="Pfam" id="PF00623">
    <property type="entry name" value="RNA_pol_Rpb1_2"/>
    <property type="match status" value="2"/>
</dbReference>
<dbReference type="Pfam" id="PF04983">
    <property type="entry name" value="RNA_pol_Rpb1_3"/>
    <property type="match status" value="1"/>
</dbReference>
<dbReference type="Pfam" id="PF05000">
    <property type="entry name" value="RNA_pol_Rpb1_4"/>
    <property type="match status" value="1"/>
</dbReference>
<dbReference type="Pfam" id="PF04998">
    <property type="entry name" value="RNA_pol_Rpb1_5"/>
    <property type="match status" value="1"/>
</dbReference>
<dbReference type="SMART" id="SM00663">
    <property type="entry name" value="RPOLA_N"/>
    <property type="match status" value="1"/>
</dbReference>
<dbReference type="SUPFAM" id="SSF64484">
    <property type="entry name" value="beta and beta-prime subunits of DNA dependent RNA-polymerase"/>
    <property type="match status" value="1"/>
</dbReference>
<accession>C5CKF4</accession>
<name>RPOC_VARPS</name>
<feature type="chain" id="PRO_1000214500" description="DNA-directed RNA polymerase subunit beta'">
    <location>
        <begin position="1"/>
        <end position="1409"/>
    </location>
</feature>
<feature type="region of interest" description="Disordered" evidence="2">
    <location>
        <begin position="1385"/>
        <end position="1409"/>
    </location>
</feature>
<feature type="compositionally biased region" description="Low complexity" evidence="2">
    <location>
        <begin position="1385"/>
        <end position="1403"/>
    </location>
</feature>
<feature type="binding site" evidence="1">
    <location>
        <position position="70"/>
    </location>
    <ligand>
        <name>Zn(2+)</name>
        <dbReference type="ChEBI" id="CHEBI:29105"/>
        <label>1</label>
    </ligand>
</feature>
<feature type="binding site" evidence="1">
    <location>
        <position position="72"/>
    </location>
    <ligand>
        <name>Zn(2+)</name>
        <dbReference type="ChEBI" id="CHEBI:29105"/>
        <label>1</label>
    </ligand>
</feature>
<feature type="binding site" evidence="1">
    <location>
        <position position="85"/>
    </location>
    <ligand>
        <name>Zn(2+)</name>
        <dbReference type="ChEBI" id="CHEBI:29105"/>
        <label>1</label>
    </ligand>
</feature>
<feature type="binding site" evidence="1">
    <location>
        <position position="88"/>
    </location>
    <ligand>
        <name>Zn(2+)</name>
        <dbReference type="ChEBI" id="CHEBI:29105"/>
        <label>1</label>
    </ligand>
</feature>
<feature type="binding site" evidence="1">
    <location>
        <position position="458"/>
    </location>
    <ligand>
        <name>Mg(2+)</name>
        <dbReference type="ChEBI" id="CHEBI:18420"/>
    </ligand>
</feature>
<feature type="binding site" evidence="1">
    <location>
        <position position="460"/>
    </location>
    <ligand>
        <name>Mg(2+)</name>
        <dbReference type="ChEBI" id="CHEBI:18420"/>
    </ligand>
</feature>
<feature type="binding site" evidence="1">
    <location>
        <position position="462"/>
    </location>
    <ligand>
        <name>Mg(2+)</name>
        <dbReference type="ChEBI" id="CHEBI:18420"/>
    </ligand>
</feature>
<feature type="binding site" evidence="1">
    <location>
        <position position="813"/>
    </location>
    <ligand>
        <name>Zn(2+)</name>
        <dbReference type="ChEBI" id="CHEBI:29105"/>
        <label>2</label>
    </ligand>
</feature>
<feature type="binding site" evidence="1">
    <location>
        <position position="887"/>
    </location>
    <ligand>
        <name>Zn(2+)</name>
        <dbReference type="ChEBI" id="CHEBI:29105"/>
        <label>2</label>
    </ligand>
</feature>
<feature type="binding site" evidence="1">
    <location>
        <position position="894"/>
    </location>
    <ligand>
        <name>Zn(2+)</name>
        <dbReference type="ChEBI" id="CHEBI:29105"/>
        <label>2</label>
    </ligand>
</feature>
<feature type="binding site" evidence="1">
    <location>
        <position position="897"/>
    </location>
    <ligand>
        <name>Zn(2+)</name>
        <dbReference type="ChEBI" id="CHEBI:29105"/>
        <label>2</label>
    </ligand>
</feature>
<reference key="1">
    <citation type="journal article" date="2011" name="J. Bacteriol.">
        <title>Complete genome sequence of the metabolically versatile plant growth-promoting endophyte, Variovorax paradoxus S110.</title>
        <authorList>
            <person name="Han J.I."/>
            <person name="Choi H.K."/>
            <person name="Lee S.W."/>
            <person name="Orwin P.M."/>
            <person name="Kim J."/>
            <person name="Laroe S.L."/>
            <person name="Kim T.G."/>
            <person name="O'Neil J."/>
            <person name="Leadbetter J.R."/>
            <person name="Lee S.Y."/>
            <person name="Hur C.G."/>
            <person name="Spain J.C."/>
            <person name="Ovchinnikova G."/>
            <person name="Goodwin L."/>
            <person name="Han C."/>
        </authorList>
    </citation>
    <scope>NUCLEOTIDE SEQUENCE [LARGE SCALE GENOMIC DNA]</scope>
    <source>
        <strain>S110</strain>
    </source>
</reference>
<protein>
    <recommendedName>
        <fullName evidence="1">DNA-directed RNA polymerase subunit beta'</fullName>
        <shortName evidence="1">RNAP subunit beta'</shortName>
        <ecNumber evidence="1">2.7.7.6</ecNumber>
    </recommendedName>
    <alternativeName>
        <fullName evidence="1">RNA polymerase subunit beta'</fullName>
    </alternativeName>
    <alternativeName>
        <fullName evidence="1">Transcriptase subunit beta'</fullName>
    </alternativeName>
</protein>
<sequence length="1409" mass="154824">MKSLLDLFKQFTPDEHFDAIKIGMASPEKIRSWSFGEVKKPETINYRTFKPERDGLFCAKIFGPIKDYECLCGKYKRLKHRGVICEKCGVEVTQTKVRRERMGHIDLAAPCAHIWFLKSLPSRLGLVLDMTLRDIERVLYFEAYVITDPGMTPLKKFGIMSEDDYDAKRKEYGDEFVAKMGAEGIKDLLEGIELDSEIERLRGDLTGSEVKVKKNSKRLKVLEAFRKSGIKPEWMVLDVLPVLPPDLRPLVPLDGGRFATSDLNDLYRRVINRNSRLRRLLELKAPEIIARNEKRMLQEAVDSLLDNGRRGKAMTGANKRALKSLADMIKGKSGRFRQNLLGKRVDYSGRSVIVVGPTLKLHQCGLPKLMALELFKPFIFSRLEAMGIATTIKAAKKEVESGTPVVWDILEEVIKEHPVMLNRAPTLHRLGIQAFEPILIEGKAIQLHPLVCAAFNADFDGDQMAVHVPLSVEAQMEARTLMLASNNVLFPASGEPSIVPSQDVVLGLYYTTRDRINGKGEGLIFSDIGEVQRALDANEVELTAKVAVRITEYTKDKETGEFTPSTSLVDTTVGRALLSEILPKGLPFSNINKALKKKEISKLINVSFRKCGLKETVVFADKLLQNGFRLATKAGISIAIDDMLVPAEKHGIIERSAKEVKEIEQQYVSGLVTSGERYNKVVDIWGKAGDEVSKVMMAKLSKQKVIDRHGKEVEQESFNSIYMMADSGARGSAAQIRQVAGMRGLMAKPDGSIIETPITANFREGLNVLEYFISTHGARKGLADTALKTANSGYLTRRLVDVTQDLVVTEQDCGTHGGYLMRAIVEGGEVIESLRDRILGRSAADDVLHPENRSVLLKAGEMFDEDNIEELEAQGVDEVKVRTALTCETRFGICATCYGRDLGRGGLINIGEAVGVIAAQSIGEPGTQLTMRTFHIGGAASRAAVASSVEAKSNGVIGFNATMRYVTNSKNELVVIARSGEIVIHDEHGRERERHKVPYGAILAVKADQQIKAGHVLANWDPLTRPIITEFAGKTQFENVEEGLTVAKQVDEVTGLSTLVVIDPKRRGAAKVVRPQVKLIDASGAEVKIPGTDHSVTIGFPIGALVQIRDGQDVGPGEVLARIPVEGQKTRDITGGLPRVAELFEARSPKDKGMLAEMTGTVSFGKETKGKIRLQITDPEGTVWEDLVPKEKNILVHEGQVVNKGESVVDGPADPQDILRLLGSEELARYIVDEVQDVYRLQGVKINDKHIEVIVRQMLRRVVVDNIGETGYISGEQVERSEMLNTNDALRAEGKIPATFTNLLLGITKASLSTDSFISAASFQETTRVLTEAAIMGKRDELRGLKENVIVGRLIPAGTGMAYHQARKAKDQMDEAERRAIAESEAAELAGSTSDVSTTADASEGAASE</sequence>
<keyword id="KW-0240">DNA-directed RNA polymerase</keyword>
<keyword id="KW-0460">Magnesium</keyword>
<keyword id="KW-0479">Metal-binding</keyword>
<keyword id="KW-0548">Nucleotidyltransferase</keyword>
<keyword id="KW-0804">Transcription</keyword>
<keyword id="KW-0808">Transferase</keyword>
<keyword id="KW-0862">Zinc</keyword>
<organism>
    <name type="scientific">Variovorax paradoxus (strain S110)</name>
    <dbReference type="NCBI Taxonomy" id="543728"/>
    <lineage>
        <taxon>Bacteria</taxon>
        <taxon>Pseudomonadati</taxon>
        <taxon>Pseudomonadota</taxon>
        <taxon>Betaproteobacteria</taxon>
        <taxon>Burkholderiales</taxon>
        <taxon>Comamonadaceae</taxon>
        <taxon>Variovorax</taxon>
    </lineage>
</organism>
<gene>
    <name evidence="1" type="primary">rpoC</name>
    <name type="ordered locus">Vapar_0589</name>
</gene>